<comment type="catalytic activity">
    <reaction evidence="1">
        <text>1-(5-phospho-beta-D-ribosyl)-ATP + H2O = 1-(5-phospho-beta-D-ribosyl)-5'-AMP + diphosphate + H(+)</text>
        <dbReference type="Rhea" id="RHEA:22828"/>
        <dbReference type="ChEBI" id="CHEBI:15377"/>
        <dbReference type="ChEBI" id="CHEBI:15378"/>
        <dbReference type="ChEBI" id="CHEBI:33019"/>
        <dbReference type="ChEBI" id="CHEBI:59457"/>
        <dbReference type="ChEBI" id="CHEBI:73183"/>
        <dbReference type="EC" id="3.6.1.31"/>
    </reaction>
</comment>
<comment type="pathway">
    <text evidence="1">Amino-acid biosynthesis; L-histidine biosynthesis; L-histidine from 5-phospho-alpha-D-ribose 1-diphosphate: step 2/9.</text>
</comment>
<comment type="subcellular location">
    <subcellularLocation>
        <location evidence="1">Cytoplasm</location>
    </subcellularLocation>
</comment>
<comment type="similarity">
    <text evidence="1">Belongs to the PRA-PH family.</text>
</comment>
<proteinExistence type="inferred from homology"/>
<accession>A3CWF5</accession>
<sequence>MRDWNILEEVWQVIQERAEHPSAGSYVSSVLTHRKGIDKSLEKVGEEAVEFILAAKNQVPERTVSEAADLLFHLLVALQASGTDVGDVLDELAARRK</sequence>
<dbReference type="EC" id="3.6.1.31" evidence="1"/>
<dbReference type="EMBL" id="CP000562">
    <property type="protein sequence ID" value="ABN57705.1"/>
    <property type="molecule type" value="Genomic_DNA"/>
</dbReference>
<dbReference type="RefSeq" id="WP_011844614.1">
    <property type="nucleotide sequence ID" value="NC_009051.1"/>
</dbReference>
<dbReference type="SMR" id="A3CWF5"/>
<dbReference type="STRING" id="368407.Memar_1779"/>
<dbReference type="GeneID" id="4847905"/>
<dbReference type="GeneID" id="76729848"/>
<dbReference type="KEGG" id="mem:Memar_1779"/>
<dbReference type="eggNOG" id="arCOG02677">
    <property type="taxonomic scope" value="Archaea"/>
</dbReference>
<dbReference type="HOGENOM" id="CLU_123337_0_0_2"/>
<dbReference type="OrthoDB" id="39686at2157"/>
<dbReference type="UniPathway" id="UPA00031">
    <property type="reaction ID" value="UER00007"/>
</dbReference>
<dbReference type="Proteomes" id="UP000002146">
    <property type="component" value="Chromosome"/>
</dbReference>
<dbReference type="GO" id="GO:0005737">
    <property type="term" value="C:cytoplasm"/>
    <property type="evidence" value="ECO:0007669"/>
    <property type="project" value="UniProtKB-SubCell"/>
</dbReference>
<dbReference type="GO" id="GO:0005524">
    <property type="term" value="F:ATP binding"/>
    <property type="evidence" value="ECO:0007669"/>
    <property type="project" value="UniProtKB-KW"/>
</dbReference>
<dbReference type="GO" id="GO:0004636">
    <property type="term" value="F:phosphoribosyl-ATP diphosphatase activity"/>
    <property type="evidence" value="ECO:0007669"/>
    <property type="project" value="UniProtKB-UniRule"/>
</dbReference>
<dbReference type="GO" id="GO:0000105">
    <property type="term" value="P:L-histidine biosynthetic process"/>
    <property type="evidence" value="ECO:0007669"/>
    <property type="project" value="UniProtKB-UniRule"/>
</dbReference>
<dbReference type="CDD" id="cd11534">
    <property type="entry name" value="NTP-PPase_HisIE_like"/>
    <property type="match status" value="1"/>
</dbReference>
<dbReference type="Gene3D" id="1.10.287.1080">
    <property type="entry name" value="MazG-like"/>
    <property type="match status" value="1"/>
</dbReference>
<dbReference type="HAMAP" id="MF_01020">
    <property type="entry name" value="HisE"/>
    <property type="match status" value="1"/>
</dbReference>
<dbReference type="InterPro" id="IPR008179">
    <property type="entry name" value="HisE"/>
</dbReference>
<dbReference type="InterPro" id="IPR021130">
    <property type="entry name" value="PRib-ATP_PPHydrolase-like"/>
</dbReference>
<dbReference type="NCBIfam" id="TIGR03188">
    <property type="entry name" value="histidine_hisI"/>
    <property type="match status" value="1"/>
</dbReference>
<dbReference type="PANTHER" id="PTHR42945">
    <property type="entry name" value="HISTIDINE BIOSYNTHESIS BIFUNCTIONAL PROTEIN"/>
    <property type="match status" value="1"/>
</dbReference>
<dbReference type="PANTHER" id="PTHR42945:SF1">
    <property type="entry name" value="HISTIDINE BIOSYNTHESIS BIFUNCTIONAL PROTEIN HIS7"/>
    <property type="match status" value="1"/>
</dbReference>
<dbReference type="Pfam" id="PF01503">
    <property type="entry name" value="PRA-PH"/>
    <property type="match status" value="1"/>
</dbReference>
<dbReference type="SUPFAM" id="SSF101386">
    <property type="entry name" value="all-alpha NTP pyrophosphatases"/>
    <property type="match status" value="1"/>
</dbReference>
<evidence type="ECO:0000255" key="1">
    <source>
        <dbReference type="HAMAP-Rule" id="MF_01020"/>
    </source>
</evidence>
<organism>
    <name type="scientific">Methanoculleus marisnigri (strain ATCC 35101 / DSM 1498 / JR1)</name>
    <dbReference type="NCBI Taxonomy" id="368407"/>
    <lineage>
        <taxon>Archaea</taxon>
        <taxon>Methanobacteriati</taxon>
        <taxon>Methanobacteriota</taxon>
        <taxon>Stenosarchaea group</taxon>
        <taxon>Methanomicrobia</taxon>
        <taxon>Methanomicrobiales</taxon>
        <taxon>Methanomicrobiaceae</taxon>
        <taxon>Methanoculleus</taxon>
    </lineage>
</organism>
<protein>
    <recommendedName>
        <fullName evidence="1">Phosphoribosyl-ATP pyrophosphatase</fullName>
        <shortName evidence="1">PRA-PH</shortName>
        <ecNumber evidence="1">3.6.1.31</ecNumber>
    </recommendedName>
</protein>
<gene>
    <name evidence="1" type="primary">hisE</name>
    <name type="ordered locus">Memar_1779</name>
</gene>
<feature type="chain" id="PRO_0000319673" description="Phosphoribosyl-ATP pyrophosphatase">
    <location>
        <begin position="1"/>
        <end position="97"/>
    </location>
</feature>
<name>HIS2_METMJ</name>
<keyword id="KW-0028">Amino-acid biosynthesis</keyword>
<keyword id="KW-0067">ATP-binding</keyword>
<keyword id="KW-0963">Cytoplasm</keyword>
<keyword id="KW-0368">Histidine biosynthesis</keyword>
<keyword id="KW-0378">Hydrolase</keyword>
<keyword id="KW-0547">Nucleotide-binding</keyword>
<reference key="1">
    <citation type="journal article" date="2009" name="Stand. Genomic Sci.">
        <title>Complete genome sequence of Methanoculleus marisnigri Romesser et al. 1981 type strain JR1.</title>
        <authorList>
            <person name="Anderson I.J."/>
            <person name="Sieprawska-Lupa M."/>
            <person name="Lapidus A."/>
            <person name="Nolan M."/>
            <person name="Copeland A."/>
            <person name="Glavina Del Rio T."/>
            <person name="Tice H."/>
            <person name="Dalin E."/>
            <person name="Barry K."/>
            <person name="Saunders E."/>
            <person name="Han C."/>
            <person name="Brettin T."/>
            <person name="Detter J.C."/>
            <person name="Bruce D."/>
            <person name="Mikhailova N."/>
            <person name="Pitluck S."/>
            <person name="Hauser L."/>
            <person name="Land M."/>
            <person name="Lucas S."/>
            <person name="Richardson P."/>
            <person name="Whitman W.B."/>
            <person name="Kyrpides N.C."/>
        </authorList>
    </citation>
    <scope>NUCLEOTIDE SEQUENCE [LARGE SCALE GENOMIC DNA]</scope>
    <source>
        <strain>ATCC 35101 / DSM 1498 / JR1</strain>
    </source>
</reference>